<protein>
    <recommendedName>
        <fullName evidence="1">Peptide chain release factor 3</fullName>
        <shortName evidence="1">RF-3</shortName>
    </recommendedName>
</protein>
<dbReference type="EMBL" id="CP000450">
    <property type="protein sequence ID" value="ABI60651.1"/>
    <property type="molecule type" value="Genomic_DNA"/>
</dbReference>
<dbReference type="RefSeq" id="WP_011635416.1">
    <property type="nucleotide sequence ID" value="NC_008344.1"/>
</dbReference>
<dbReference type="SMR" id="Q0ADD1"/>
<dbReference type="STRING" id="335283.Neut_2442"/>
<dbReference type="KEGG" id="net:Neut_2442"/>
<dbReference type="eggNOG" id="COG4108">
    <property type="taxonomic scope" value="Bacteria"/>
</dbReference>
<dbReference type="HOGENOM" id="CLU_002794_2_1_4"/>
<dbReference type="OrthoDB" id="9804431at2"/>
<dbReference type="Proteomes" id="UP000001966">
    <property type="component" value="Chromosome"/>
</dbReference>
<dbReference type="GO" id="GO:0005829">
    <property type="term" value="C:cytosol"/>
    <property type="evidence" value="ECO:0007669"/>
    <property type="project" value="TreeGrafter"/>
</dbReference>
<dbReference type="GO" id="GO:0005525">
    <property type="term" value="F:GTP binding"/>
    <property type="evidence" value="ECO:0007669"/>
    <property type="project" value="UniProtKB-UniRule"/>
</dbReference>
<dbReference type="GO" id="GO:0003924">
    <property type="term" value="F:GTPase activity"/>
    <property type="evidence" value="ECO:0007669"/>
    <property type="project" value="InterPro"/>
</dbReference>
<dbReference type="GO" id="GO:0016150">
    <property type="term" value="F:translation release factor activity, codon nonspecific"/>
    <property type="evidence" value="ECO:0007669"/>
    <property type="project" value="TreeGrafter"/>
</dbReference>
<dbReference type="GO" id="GO:0016149">
    <property type="term" value="F:translation release factor activity, codon specific"/>
    <property type="evidence" value="ECO:0007669"/>
    <property type="project" value="UniProtKB-UniRule"/>
</dbReference>
<dbReference type="GO" id="GO:0006449">
    <property type="term" value="P:regulation of translational termination"/>
    <property type="evidence" value="ECO:0007669"/>
    <property type="project" value="UniProtKB-UniRule"/>
</dbReference>
<dbReference type="CDD" id="cd04169">
    <property type="entry name" value="RF3"/>
    <property type="match status" value="1"/>
</dbReference>
<dbReference type="FunFam" id="3.30.70.3280:FF:000001">
    <property type="entry name" value="Peptide chain release factor 3"/>
    <property type="match status" value="1"/>
</dbReference>
<dbReference type="FunFam" id="3.40.50.300:FF:000542">
    <property type="entry name" value="Peptide chain release factor 3"/>
    <property type="match status" value="1"/>
</dbReference>
<dbReference type="Gene3D" id="3.40.50.300">
    <property type="entry name" value="P-loop containing nucleotide triphosphate hydrolases"/>
    <property type="match status" value="1"/>
</dbReference>
<dbReference type="Gene3D" id="3.30.70.3280">
    <property type="entry name" value="Peptide chain release factor 3, domain III"/>
    <property type="match status" value="1"/>
</dbReference>
<dbReference type="Gene3D" id="2.40.30.10">
    <property type="entry name" value="Translation factors"/>
    <property type="match status" value="1"/>
</dbReference>
<dbReference type="HAMAP" id="MF_00072">
    <property type="entry name" value="Rel_fac_3"/>
    <property type="match status" value="1"/>
</dbReference>
<dbReference type="InterPro" id="IPR053905">
    <property type="entry name" value="EF-G-like_DII"/>
</dbReference>
<dbReference type="InterPro" id="IPR035647">
    <property type="entry name" value="EFG_III/V"/>
</dbReference>
<dbReference type="InterPro" id="IPR031157">
    <property type="entry name" value="G_TR_CS"/>
</dbReference>
<dbReference type="InterPro" id="IPR027417">
    <property type="entry name" value="P-loop_NTPase"/>
</dbReference>
<dbReference type="InterPro" id="IPR004548">
    <property type="entry name" value="PrfC"/>
</dbReference>
<dbReference type="InterPro" id="IPR032090">
    <property type="entry name" value="RF3_C"/>
</dbReference>
<dbReference type="InterPro" id="IPR038467">
    <property type="entry name" value="RF3_dom_3_sf"/>
</dbReference>
<dbReference type="InterPro" id="IPR041732">
    <property type="entry name" value="RF3_GTP-bd"/>
</dbReference>
<dbReference type="InterPro" id="IPR005225">
    <property type="entry name" value="Small_GTP-bd"/>
</dbReference>
<dbReference type="InterPro" id="IPR000795">
    <property type="entry name" value="T_Tr_GTP-bd_dom"/>
</dbReference>
<dbReference type="InterPro" id="IPR009000">
    <property type="entry name" value="Transl_B-barrel_sf"/>
</dbReference>
<dbReference type="NCBIfam" id="TIGR00503">
    <property type="entry name" value="prfC"/>
    <property type="match status" value="1"/>
</dbReference>
<dbReference type="NCBIfam" id="NF001964">
    <property type="entry name" value="PRK00741.1"/>
    <property type="match status" value="1"/>
</dbReference>
<dbReference type="NCBIfam" id="TIGR00231">
    <property type="entry name" value="small_GTP"/>
    <property type="match status" value="1"/>
</dbReference>
<dbReference type="PANTHER" id="PTHR43556">
    <property type="entry name" value="PEPTIDE CHAIN RELEASE FACTOR RF3"/>
    <property type="match status" value="1"/>
</dbReference>
<dbReference type="PANTHER" id="PTHR43556:SF2">
    <property type="entry name" value="PEPTIDE CHAIN RELEASE FACTOR RF3"/>
    <property type="match status" value="1"/>
</dbReference>
<dbReference type="Pfam" id="PF22042">
    <property type="entry name" value="EF-G_D2"/>
    <property type="match status" value="1"/>
</dbReference>
<dbReference type="Pfam" id="PF00009">
    <property type="entry name" value="GTP_EFTU"/>
    <property type="match status" value="1"/>
</dbReference>
<dbReference type="Pfam" id="PF16658">
    <property type="entry name" value="RF3_C"/>
    <property type="match status" value="1"/>
</dbReference>
<dbReference type="PRINTS" id="PR00315">
    <property type="entry name" value="ELONGATNFCT"/>
</dbReference>
<dbReference type="SUPFAM" id="SSF54980">
    <property type="entry name" value="EF-G C-terminal domain-like"/>
    <property type="match status" value="1"/>
</dbReference>
<dbReference type="SUPFAM" id="SSF52540">
    <property type="entry name" value="P-loop containing nucleoside triphosphate hydrolases"/>
    <property type="match status" value="1"/>
</dbReference>
<dbReference type="SUPFAM" id="SSF50447">
    <property type="entry name" value="Translation proteins"/>
    <property type="match status" value="1"/>
</dbReference>
<dbReference type="PROSITE" id="PS00301">
    <property type="entry name" value="G_TR_1"/>
    <property type="match status" value="1"/>
</dbReference>
<dbReference type="PROSITE" id="PS51722">
    <property type="entry name" value="G_TR_2"/>
    <property type="match status" value="1"/>
</dbReference>
<gene>
    <name evidence="1" type="primary">prfC</name>
    <name type="ordered locus">Neut_2442</name>
</gene>
<name>RF3_NITEC</name>
<evidence type="ECO:0000255" key="1">
    <source>
        <dbReference type="HAMAP-Rule" id="MF_00072"/>
    </source>
</evidence>
<keyword id="KW-0963">Cytoplasm</keyword>
<keyword id="KW-0342">GTP-binding</keyword>
<keyword id="KW-0547">Nucleotide-binding</keyword>
<keyword id="KW-0648">Protein biosynthesis</keyword>
<feature type="chain" id="PRO_1000023663" description="Peptide chain release factor 3">
    <location>
        <begin position="1"/>
        <end position="535"/>
    </location>
</feature>
<feature type="domain" description="tr-type G">
    <location>
        <begin position="8"/>
        <end position="277"/>
    </location>
</feature>
<feature type="binding site" evidence="1">
    <location>
        <begin position="17"/>
        <end position="24"/>
    </location>
    <ligand>
        <name>GTP</name>
        <dbReference type="ChEBI" id="CHEBI:37565"/>
    </ligand>
</feature>
<feature type="binding site" evidence="1">
    <location>
        <begin position="85"/>
        <end position="89"/>
    </location>
    <ligand>
        <name>GTP</name>
        <dbReference type="ChEBI" id="CHEBI:37565"/>
    </ligand>
</feature>
<feature type="binding site" evidence="1">
    <location>
        <begin position="139"/>
        <end position="142"/>
    </location>
    <ligand>
        <name>GTP</name>
        <dbReference type="ChEBI" id="CHEBI:37565"/>
    </ligand>
</feature>
<sequence length="535" mass="59643">MTIDHEVKRRRTFAIISHPDAGKTTLTEKLLLFAGAIHIAGSVKARKASRHATSDWMEIEKQRGISVASSVMQMEYRGCVINLLDTPGHQDFSEDTYRVLTAVDAALMVIDAANGVESQTLRLLQVCRARNTPIITFVNKLDREVREPLDLIDEIERTLGMDVVPFTWPVGSGKRFHGVYDLRHELMRVFRPGMDHAEQKDTTIITDLGDPAVTKRFGANLEQARQEIDLIKGAAPEFDQAAFLAGQQTPVFFGSAINNFGVQEVLDTLVDLAPPPGTRKAIQREILPTENKFSGVVFKIQANMNPAHRDRIAFVRICSGEFRRGMSLKVVRSGKDVRTSTVVSFLSQRRELLETAYAGDIIGIPNHGTLQLADTLTEGDNLQFTGLPFFAPEIFQTVEIADPLRSKQLKLGLTQLGEEGAIQVFRPHLGSILLLGAVGQLQFEVVTHRLKHEYGVEARVAPAKYQLARWVTAEMPRELQRFIDANTHRIAYDAVDAPTFLASFSAEISVAEENWPGIRFHKMREHAGLLFQTAS</sequence>
<reference key="1">
    <citation type="journal article" date="2007" name="Environ. Microbiol.">
        <title>Whole-genome analysis of the ammonia-oxidizing bacterium, Nitrosomonas eutropha C91: implications for niche adaptation.</title>
        <authorList>
            <person name="Stein L.Y."/>
            <person name="Arp D.J."/>
            <person name="Berube P.M."/>
            <person name="Chain P.S."/>
            <person name="Hauser L."/>
            <person name="Jetten M.S."/>
            <person name="Klotz M.G."/>
            <person name="Larimer F.W."/>
            <person name="Norton J.M."/>
            <person name="Op den Camp H.J.M."/>
            <person name="Shin M."/>
            <person name="Wei X."/>
        </authorList>
    </citation>
    <scope>NUCLEOTIDE SEQUENCE [LARGE SCALE GENOMIC DNA]</scope>
    <source>
        <strain>DSM 101675 / C91 / Nm57</strain>
    </source>
</reference>
<comment type="function">
    <text evidence="1">Increases the formation of ribosomal termination complexes and stimulates activities of RF-1 and RF-2. It binds guanine nucleotides and has strong preference for UGA stop codons. It may interact directly with the ribosome. The stimulation of RF-1 and RF-2 is significantly reduced by GTP and GDP, but not by GMP.</text>
</comment>
<comment type="subcellular location">
    <subcellularLocation>
        <location evidence="1">Cytoplasm</location>
    </subcellularLocation>
</comment>
<comment type="similarity">
    <text evidence="1">Belongs to the TRAFAC class translation factor GTPase superfamily. Classic translation factor GTPase family. PrfC subfamily.</text>
</comment>
<proteinExistence type="inferred from homology"/>
<organism>
    <name type="scientific">Nitrosomonas eutropha (strain DSM 101675 / C91 / Nm57)</name>
    <dbReference type="NCBI Taxonomy" id="335283"/>
    <lineage>
        <taxon>Bacteria</taxon>
        <taxon>Pseudomonadati</taxon>
        <taxon>Pseudomonadota</taxon>
        <taxon>Betaproteobacteria</taxon>
        <taxon>Nitrosomonadales</taxon>
        <taxon>Nitrosomonadaceae</taxon>
        <taxon>Nitrosomonas</taxon>
    </lineage>
</organism>
<accession>Q0ADD1</accession>